<reference key="1">
    <citation type="journal article" date="2015" name="Genome Announc.">
        <title>Complete Genome Sequence of Methanosphaerula palustris E1-9CT, a Hydrogenotrophic Methanogen Isolated from a Minerotrophic Fen Peatland.</title>
        <authorList>
            <person name="Cadillo-Quiroz H."/>
            <person name="Browne P."/>
            <person name="Kyrpides N."/>
            <person name="Woyke T."/>
            <person name="Goodwin L."/>
            <person name="Detter C."/>
            <person name="Yavitt J.B."/>
            <person name="Zinder S.H."/>
        </authorList>
    </citation>
    <scope>NUCLEOTIDE SEQUENCE [LARGE SCALE GENOMIC DNA]</scope>
    <source>
        <strain>ATCC BAA-1556 / DSM 19958 / E1-9c</strain>
    </source>
</reference>
<evidence type="ECO:0000255" key="1">
    <source>
        <dbReference type="HAMAP-Rule" id="MF_01117"/>
    </source>
</evidence>
<name>CDPAS_METPE</name>
<dbReference type="EC" id="2.7.7.67" evidence="1"/>
<dbReference type="EMBL" id="CP001338">
    <property type="protein sequence ID" value="ACL17643.1"/>
    <property type="molecule type" value="Genomic_DNA"/>
</dbReference>
<dbReference type="RefSeq" id="WP_012618962.1">
    <property type="nucleotide sequence ID" value="NC_011832.1"/>
</dbReference>
<dbReference type="SMR" id="B8GEE2"/>
<dbReference type="STRING" id="521011.Mpal_2361"/>
<dbReference type="GeneID" id="7272082"/>
<dbReference type="KEGG" id="mpl:Mpal_2361"/>
<dbReference type="eggNOG" id="arCOG04106">
    <property type="taxonomic scope" value="Archaea"/>
</dbReference>
<dbReference type="HOGENOM" id="CLU_105710_0_0_2"/>
<dbReference type="UniPathway" id="UPA00940"/>
<dbReference type="Proteomes" id="UP000002457">
    <property type="component" value="Chromosome"/>
</dbReference>
<dbReference type="GO" id="GO:0005886">
    <property type="term" value="C:plasma membrane"/>
    <property type="evidence" value="ECO:0007669"/>
    <property type="project" value="UniProtKB-SubCell"/>
</dbReference>
<dbReference type="GO" id="GO:0043338">
    <property type="term" value="F:CDP-2,3-bis-(O-geranylgeranyl)-sn-glycerol synthase activity"/>
    <property type="evidence" value="ECO:0007669"/>
    <property type="project" value="UniProtKB-EC"/>
</dbReference>
<dbReference type="GO" id="GO:0046474">
    <property type="term" value="P:glycerophospholipid biosynthetic process"/>
    <property type="evidence" value="ECO:0007669"/>
    <property type="project" value="UniProtKB-UniRule"/>
</dbReference>
<dbReference type="HAMAP" id="MF_01117">
    <property type="entry name" value="CDP_archaeol_synth"/>
    <property type="match status" value="1"/>
</dbReference>
<dbReference type="InterPro" id="IPR032690">
    <property type="entry name" value="CarS"/>
</dbReference>
<dbReference type="InterPro" id="IPR002726">
    <property type="entry name" value="CarS_archaea"/>
</dbReference>
<dbReference type="NCBIfam" id="NF003114">
    <property type="entry name" value="PRK04032.1"/>
    <property type="match status" value="1"/>
</dbReference>
<dbReference type="PANTHER" id="PTHR39650">
    <property type="entry name" value="CDP-ARCHAEOL SYNTHASE"/>
    <property type="match status" value="1"/>
</dbReference>
<dbReference type="PANTHER" id="PTHR39650:SF1">
    <property type="entry name" value="CDP-ARCHAEOL SYNTHASE"/>
    <property type="match status" value="1"/>
</dbReference>
<dbReference type="Pfam" id="PF01864">
    <property type="entry name" value="CarS-like"/>
    <property type="match status" value="1"/>
</dbReference>
<accession>B8GEE2</accession>
<comment type="function">
    <text evidence="1">Catalyzes the formation of CDP-2,3-bis-(O-geranylgeranyl)-sn-glycerol (CDP-archaeol) from 2,3-bis-(O-geranylgeranyl)-sn-glycerol 1-phosphate (DGGGP) and CTP. This reaction is the third ether-bond-formation step in the biosynthesis of archaeal membrane lipids.</text>
</comment>
<comment type="catalytic activity">
    <reaction evidence="1">
        <text>2,3-bis-O-(geranylgeranyl)-sn-glycerol 1-phosphate + CTP + H(+) = CDP-2,3-bis-O-(geranylgeranyl)-sn-glycerol + diphosphate</text>
        <dbReference type="Rhea" id="RHEA:25690"/>
        <dbReference type="ChEBI" id="CHEBI:15378"/>
        <dbReference type="ChEBI" id="CHEBI:33019"/>
        <dbReference type="ChEBI" id="CHEBI:37563"/>
        <dbReference type="ChEBI" id="CHEBI:58837"/>
        <dbReference type="ChEBI" id="CHEBI:58838"/>
        <dbReference type="EC" id="2.7.7.67"/>
    </reaction>
</comment>
<comment type="cofactor">
    <cofactor evidence="1">
        <name>Mg(2+)</name>
        <dbReference type="ChEBI" id="CHEBI:18420"/>
    </cofactor>
</comment>
<comment type="pathway">
    <text evidence="1">Membrane lipid metabolism; glycerophospholipid metabolism.</text>
</comment>
<comment type="subcellular location">
    <subcellularLocation>
        <location evidence="1">Cell membrane</location>
        <topology evidence="1">Multi-pass membrane protein</topology>
    </subcellularLocation>
</comment>
<comment type="similarity">
    <text evidence="1">Belongs to the CDP-archaeol synthase family.</text>
</comment>
<protein>
    <recommendedName>
        <fullName evidence="1">CDP-archaeol synthase</fullName>
        <ecNumber evidence="1">2.7.7.67</ecNumber>
    </recommendedName>
    <alternativeName>
        <fullName evidence="1">CDP-2,3-bis-(O-geranylgeranyl)-sn-glycerol synthase</fullName>
    </alternativeName>
</protein>
<feature type="chain" id="PRO_1000164038" description="CDP-archaeol synthase">
    <location>
        <begin position="1"/>
        <end position="166"/>
    </location>
</feature>
<feature type="transmembrane region" description="Helical" evidence="1">
    <location>
        <begin position="42"/>
        <end position="62"/>
    </location>
</feature>
<feature type="transmembrane region" description="Helical" evidence="1">
    <location>
        <begin position="73"/>
        <end position="93"/>
    </location>
</feature>
<feature type="transmembrane region" description="Helical" evidence="1">
    <location>
        <begin position="103"/>
        <end position="123"/>
    </location>
</feature>
<feature type="transmembrane region" description="Helical" evidence="1">
    <location>
        <begin position="128"/>
        <end position="148"/>
    </location>
</feature>
<sequence length="166" mass="17806">MLPAYLPNPAAALFGGGTPIDGGRRWSDGRRLLGDGKTWRGLVLGILSGVLLGLIQVSVQDACVFVWLPRHTVLSVLLLAVGALAGDMVKSFVKRRIGKERGAAWPLADQYDLVAGSLLLLLIGDYGFAAVNLTIPVIFWILVLTPLLHRAVNLIGYAIGVKDVPW</sequence>
<organism>
    <name type="scientific">Methanosphaerula palustris (strain ATCC BAA-1556 / DSM 19958 / E1-9c)</name>
    <dbReference type="NCBI Taxonomy" id="521011"/>
    <lineage>
        <taxon>Archaea</taxon>
        <taxon>Methanobacteriati</taxon>
        <taxon>Methanobacteriota</taxon>
        <taxon>Stenosarchaea group</taxon>
        <taxon>Methanomicrobia</taxon>
        <taxon>Methanomicrobiales</taxon>
        <taxon>Methanoregulaceae</taxon>
        <taxon>Methanosphaerula</taxon>
    </lineage>
</organism>
<keyword id="KW-1003">Cell membrane</keyword>
<keyword id="KW-0444">Lipid biosynthesis</keyword>
<keyword id="KW-0443">Lipid metabolism</keyword>
<keyword id="KW-0460">Magnesium</keyword>
<keyword id="KW-0472">Membrane</keyword>
<keyword id="KW-0594">Phospholipid biosynthesis</keyword>
<keyword id="KW-1208">Phospholipid metabolism</keyword>
<keyword id="KW-1185">Reference proteome</keyword>
<keyword id="KW-0808">Transferase</keyword>
<keyword id="KW-0812">Transmembrane</keyword>
<keyword id="KW-1133">Transmembrane helix</keyword>
<proteinExistence type="inferred from homology"/>
<gene>
    <name evidence="1" type="primary">carS</name>
    <name type="ordered locus">Mpal_2361</name>
</gene>